<organism>
    <name type="scientific">Paraburkholderia phytofirmans (strain DSM 17436 / LMG 22146 / PsJN)</name>
    <name type="common">Burkholderia phytofirmans</name>
    <dbReference type="NCBI Taxonomy" id="398527"/>
    <lineage>
        <taxon>Bacteria</taxon>
        <taxon>Pseudomonadati</taxon>
        <taxon>Pseudomonadota</taxon>
        <taxon>Betaproteobacteria</taxon>
        <taxon>Burkholderiales</taxon>
        <taxon>Burkholderiaceae</taxon>
        <taxon>Paraburkholderia</taxon>
    </lineage>
</organism>
<accession>B2T3J1</accession>
<gene>
    <name evidence="1" type="primary">ssuD</name>
    <name type="ordered locus">Bphyt_1744</name>
</gene>
<reference key="1">
    <citation type="journal article" date="2011" name="J. Bacteriol.">
        <title>Complete genome sequence of the plant growth-promoting endophyte Burkholderia phytofirmans strain PsJN.</title>
        <authorList>
            <person name="Weilharter A."/>
            <person name="Mitter B."/>
            <person name="Shin M.V."/>
            <person name="Chain P.S."/>
            <person name="Nowak J."/>
            <person name="Sessitsch A."/>
        </authorList>
    </citation>
    <scope>NUCLEOTIDE SEQUENCE [LARGE SCALE GENOMIC DNA]</scope>
    <source>
        <strain>DSM 17436 / LMG 22146 / PsJN</strain>
    </source>
</reference>
<sequence length="386" mass="41837">MNVFWFIPTHGDSRYLGTSQGARAADYDYFQQIAVAADTLGYEGVLLPTGRSCEDAWVVASSLIAATKRLKFLVAIRPGISSPGLAARMAATFDRLSNGRLLINVVTGGDAAELEGDGVFVDHDTRYEITDEFLHIWRKLLTAAHTNDAIDFEGKHLSSKGGKALYPPVQNPHPPLWFGGSSPAAHEMAGEHIDTYLTWGEPPAAVAKKIADIRARAAAHGRQIKFGIRLHVIVRETEEEAWAAADKLISKLDDETISRAQASFSKMDSEGQRRMAALHGGKRGGRAELEVYPNLWAGVGLVRGGAGTALVGNPEQVAARMKEYAELGIDTFILSGYPHLEESYRFAELVFPLLPNRRNKVSNGPLSGPFGEIVGNNYLPKAASSS</sequence>
<protein>
    <recommendedName>
        <fullName evidence="1">Alkanesulfonate monooxygenase</fullName>
        <ecNumber evidence="1">1.14.14.5</ecNumber>
    </recommendedName>
    <alternativeName>
        <fullName evidence="1">FMNH2-dependent aliphatic sulfonate monooxygenase</fullName>
    </alternativeName>
</protein>
<dbReference type="EC" id="1.14.14.5" evidence="1"/>
<dbReference type="EMBL" id="CP001052">
    <property type="protein sequence ID" value="ACD16152.1"/>
    <property type="molecule type" value="Genomic_DNA"/>
</dbReference>
<dbReference type="RefSeq" id="WP_012432761.1">
    <property type="nucleotide sequence ID" value="NC_010681.1"/>
</dbReference>
<dbReference type="SMR" id="B2T3J1"/>
<dbReference type="STRING" id="398527.Bphyt_1744"/>
<dbReference type="KEGG" id="bpy:Bphyt_1744"/>
<dbReference type="eggNOG" id="COG2141">
    <property type="taxonomic scope" value="Bacteria"/>
</dbReference>
<dbReference type="HOGENOM" id="CLU_027853_1_0_4"/>
<dbReference type="OrthoDB" id="9814695at2"/>
<dbReference type="Proteomes" id="UP000001739">
    <property type="component" value="Chromosome 1"/>
</dbReference>
<dbReference type="GO" id="GO:0008726">
    <property type="term" value="F:alkanesulfonate monooxygenase activity"/>
    <property type="evidence" value="ECO:0007669"/>
    <property type="project" value="UniProtKB-UniRule"/>
</dbReference>
<dbReference type="GO" id="GO:0046306">
    <property type="term" value="P:alkanesulfonate catabolic process"/>
    <property type="evidence" value="ECO:0007669"/>
    <property type="project" value="TreeGrafter"/>
</dbReference>
<dbReference type="CDD" id="cd01094">
    <property type="entry name" value="Alkanesulfonate_monoxygenase"/>
    <property type="match status" value="1"/>
</dbReference>
<dbReference type="Gene3D" id="3.20.20.30">
    <property type="entry name" value="Luciferase-like domain"/>
    <property type="match status" value="1"/>
</dbReference>
<dbReference type="HAMAP" id="MF_01229">
    <property type="entry name" value="Alkanesulf_monooxygen"/>
    <property type="match status" value="1"/>
</dbReference>
<dbReference type="InterPro" id="IPR019911">
    <property type="entry name" value="Alkanesulphonate_mOase_FMN-dep"/>
</dbReference>
<dbReference type="InterPro" id="IPR011251">
    <property type="entry name" value="Luciferase-like_dom"/>
</dbReference>
<dbReference type="InterPro" id="IPR036661">
    <property type="entry name" value="Luciferase-like_sf"/>
</dbReference>
<dbReference type="InterPro" id="IPR050172">
    <property type="entry name" value="SsuD_RutA_monooxygenase"/>
</dbReference>
<dbReference type="NCBIfam" id="TIGR03565">
    <property type="entry name" value="alk_sulf_monoox"/>
    <property type="match status" value="1"/>
</dbReference>
<dbReference type="NCBIfam" id="NF001939">
    <property type="entry name" value="PRK00719.1"/>
    <property type="match status" value="1"/>
</dbReference>
<dbReference type="PANTHER" id="PTHR42847">
    <property type="entry name" value="ALKANESULFONATE MONOOXYGENASE"/>
    <property type="match status" value="1"/>
</dbReference>
<dbReference type="PANTHER" id="PTHR42847:SF4">
    <property type="entry name" value="ALKANESULFONATE MONOOXYGENASE-RELATED"/>
    <property type="match status" value="1"/>
</dbReference>
<dbReference type="Pfam" id="PF00296">
    <property type="entry name" value="Bac_luciferase"/>
    <property type="match status" value="1"/>
</dbReference>
<dbReference type="SUPFAM" id="SSF51679">
    <property type="entry name" value="Bacterial luciferase-like"/>
    <property type="match status" value="1"/>
</dbReference>
<keyword id="KW-0285">Flavoprotein</keyword>
<keyword id="KW-0288">FMN</keyword>
<keyword id="KW-0503">Monooxygenase</keyword>
<keyword id="KW-0560">Oxidoreductase</keyword>
<evidence type="ECO:0000255" key="1">
    <source>
        <dbReference type="HAMAP-Rule" id="MF_01229"/>
    </source>
</evidence>
<feature type="chain" id="PRO_1000139613" description="Alkanesulfonate monooxygenase">
    <location>
        <begin position="1"/>
        <end position="386"/>
    </location>
</feature>
<name>SSUD_PARPJ</name>
<proteinExistence type="inferred from homology"/>
<comment type="function">
    <text evidence="1">Catalyzes the desulfonation of aliphatic sulfonates.</text>
</comment>
<comment type="catalytic activity">
    <reaction evidence="1">
        <text>an alkanesulfonate + FMNH2 + O2 = an aldehyde + FMN + sulfite + H2O + 2 H(+)</text>
        <dbReference type="Rhea" id="RHEA:23064"/>
        <dbReference type="ChEBI" id="CHEBI:15377"/>
        <dbReference type="ChEBI" id="CHEBI:15378"/>
        <dbReference type="ChEBI" id="CHEBI:15379"/>
        <dbReference type="ChEBI" id="CHEBI:17359"/>
        <dbReference type="ChEBI" id="CHEBI:17478"/>
        <dbReference type="ChEBI" id="CHEBI:57618"/>
        <dbReference type="ChEBI" id="CHEBI:58210"/>
        <dbReference type="ChEBI" id="CHEBI:134249"/>
        <dbReference type="EC" id="1.14.14.5"/>
    </reaction>
</comment>
<comment type="similarity">
    <text evidence="1">Belongs to the SsuD family.</text>
</comment>